<dbReference type="EMBL" id="AE015451">
    <property type="protein sequence ID" value="AAN70596.1"/>
    <property type="molecule type" value="Genomic_DNA"/>
</dbReference>
<dbReference type="RefSeq" id="NP_747132.1">
    <property type="nucleotide sequence ID" value="NC_002947.4"/>
</dbReference>
<dbReference type="RefSeq" id="WP_010955588.1">
    <property type="nucleotide sequence ID" value="NZ_CP169744.1"/>
</dbReference>
<dbReference type="SMR" id="Q88CZ8"/>
<dbReference type="STRING" id="160488.PP_5031"/>
<dbReference type="PaxDb" id="160488-PP_5031"/>
<dbReference type="KEGG" id="ppu:PP_5031"/>
<dbReference type="PATRIC" id="fig|160488.4.peg.5372"/>
<dbReference type="eggNOG" id="COG1113">
    <property type="taxonomic scope" value="Bacteria"/>
</dbReference>
<dbReference type="HOGENOM" id="CLU_007946_9_3_6"/>
<dbReference type="OrthoDB" id="5297508at2"/>
<dbReference type="PhylomeDB" id="Q88CZ8"/>
<dbReference type="BioCyc" id="PPUT160488:G1G01-5376-MONOMER"/>
<dbReference type="Proteomes" id="UP000000556">
    <property type="component" value="Chromosome"/>
</dbReference>
<dbReference type="GO" id="GO:0005886">
    <property type="term" value="C:plasma membrane"/>
    <property type="evidence" value="ECO:0007669"/>
    <property type="project" value="UniProtKB-SubCell"/>
</dbReference>
<dbReference type="GO" id="GO:0015293">
    <property type="term" value="F:symporter activity"/>
    <property type="evidence" value="ECO:0007669"/>
    <property type="project" value="UniProtKB-KW"/>
</dbReference>
<dbReference type="GO" id="GO:0006865">
    <property type="term" value="P:amino acid transport"/>
    <property type="evidence" value="ECO:0007669"/>
    <property type="project" value="UniProtKB-KW"/>
</dbReference>
<dbReference type="FunFam" id="1.20.1740.10:FF:000001">
    <property type="entry name" value="Amino acid permease"/>
    <property type="match status" value="1"/>
</dbReference>
<dbReference type="Gene3D" id="1.20.1740.10">
    <property type="entry name" value="Amino acid/polyamine transporter I"/>
    <property type="match status" value="1"/>
</dbReference>
<dbReference type="InterPro" id="IPR004841">
    <property type="entry name" value="AA-permease/SLC12A_dom"/>
</dbReference>
<dbReference type="InterPro" id="IPR004840">
    <property type="entry name" value="Amino_acid_permease_CS"/>
</dbReference>
<dbReference type="PANTHER" id="PTHR43495:SF4">
    <property type="entry name" value="AROMATIC AMINO ACID TRANSPORT PROTEIN AROP"/>
    <property type="match status" value="1"/>
</dbReference>
<dbReference type="PANTHER" id="PTHR43495">
    <property type="entry name" value="GABA PERMEASE"/>
    <property type="match status" value="1"/>
</dbReference>
<dbReference type="Pfam" id="PF00324">
    <property type="entry name" value="AA_permease"/>
    <property type="match status" value="1"/>
</dbReference>
<dbReference type="PIRSF" id="PIRSF006060">
    <property type="entry name" value="AA_transporter"/>
    <property type="match status" value="1"/>
</dbReference>
<dbReference type="PROSITE" id="PS00218">
    <property type="entry name" value="AMINO_ACID_PERMEASE_1"/>
    <property type="match status" value="1"/>
</dbReference>
<comment type="function">
    <text evidence="2">Major high-affinity histidine transporter (PubMed:34245008). Binds and catalyzes the uptake of histidine into the cell (PubMed:34245008). Functions as an histidine:proton symporter with high specificity for histidine (PubMed:34245008).</text>
</comment>
<comment type="catalytic activity">
    <reaction evidence="2">
        <text>L-histidine(out) + n H(+)(out) = L-histidine(in) + n H(+)(in)</text>
        <dbReference type="Rhea" id="RHEA:76379"/>
        <dbReference type="ChEBI" id="CHEBI:15378"/>
        <dbReference type="ChEBI" id="CHEBI:57595"/>
    </reaction>
    <physiologicalReaction direction="left-to-right" evidence="2">
        <dbReference type="Rhea" id="RHEA:76380"/>
    </physiologicalReaction>
</comment>
<comment type="activity regulation">
    <text evidence="2">Transport activity is inhibited by the proton ionophores carbonyl cyanide m-chlorophenyl hydrazine (CCCP) and 2,4-dinitrophenol (DNP), but not by valinomycin, nigericin and nonactin (PubMed:34245008). Uptake is reduced in the presence of the sulfhydryl reagent N-ethylmaleimide (NEM) (PubMed:34245008). Uptake is not affected by arginine, lysine, proline or compounds structurally related to histidine such as imidazole, 3-amino-1,2,4-triazole and urocanate (PubMed:34245008). Only 1,2,4-triazolyl-3-alanine reduces the rate of L-histidine uptake significantly (PubMed:34245008).</text>
</comment>
<comment type="biophysicochemical properties">
    <kinetics>
        <KM evidence="2">0.83 uM for L-histidine (in proteoliposomes)</KM>
        <KM evidence="2">0.99 uM for L-histidine (in intact cells of P.putida LW1)</KM>
        <Vmax evidence="2">2.34 nmol/min/mg enzyme (in proteoliposomes)</Vmax>
        <Vmax evidence="2">1.93 nmol/min/mg enzyme (in intact cells of P.putida LW1)</Vmax>
    </kinetics>
</comment>
<comment type="subcellular location">
    <subcellularLocation>
        <location evidence="5">Cell inner membrane</location>
        <topology evidence="1">Multi-pass membrane protein</topology>
    </subcellularLocation>
</comment>
<comment type="disruption phenotype">
    <text evidence="2">Deletion of the gene severely impairs growth on histidine.</text>
</comment>
<comment type="similarity">
    <text evidence="4">Belongs to the amino acid-polyamine-organocation (APC) superfamily. Amino acid transporter (AAT) (TC 2.A.3.1) family.</text>
</comment>
<protein>
    <recommendedName>
        <fullName evidence="4">L-histidine transporter HutT</fullName>
    </recommendedName>
</protein>
<accession>Q88CZ8</accession>
<organism>
    <name type="scientific">Pseudomonas putida (strain ATCC 47054 / DSM 6125 / CFBP 8728 / NCIMB 11950 / KT2440)</name>
    <dbReference type="NCBI Taxonomy" id="160488"/>
    <lineage>
        <taxon>Bacteria</taxon>
        <taxon>Pseudomonadati</taxon>
        <taxon>Pseudomonadota</taxon>
        <taxon>Gammaproteobacteria</taxon>
        <taxon>Pseudomonadales</taxon>
        <taxon>Pseudomonadaceae</taxon>
        <taxon>Pseudomonas</taxon>
    </lineage>
</organism>
<gene>
    <name evidence="3" type="primary">hutT</name>
    <name evidence="6" type="ordered locus">PP_5031</name>
</gene>
<keyword id="KW-0029">Amino-acid transport</keyword>
<keyword id="KW-0997">Cell inner membrane</keyword>
<keyword id="KW-1003">Cell membrane</keyword>
<keyword id="KW-0472">Membrane</keyword>
<keyword id="KW-1185">Reference proteome</keyword>
<keyword id="KW-0769">Symport</keyword>
<keyword id="KW-0812">Transmembrane</keyword>
<keyword id="KW-1133">Transmembrane helix</keyword>
<keyword id="KW-0813">Transport</keyword>
<evidence type="ECO:0000255" key="1"/>
<evidence type="ECO:0000269" key="2">
    <source>
    </source>
</evidence>
<evidence type="ECO:0000303" key="3">
    <source>
    </source>
</evidence>
<evidence type="ECO:0000305" key="4"/>
<evidence type="ECO:0000305" key="5">
    <source>
    </source>
</evidence>
<evidence type="ECO:0000312" key="6">
    <source>
        <dbReference type="EMBL" id="AAN70596.1"/>
    </source>
</evidence>
<reference key="1">
    <citation type="journal article" date="2002" name="Environ. Microbiol.">
        <title>Complete genome sequence and comparative analysis of the metabolically versatile Pseudomonas putida KT2440.</title>
        <authorList>
            <person name="Nelson K.E."/>
            <person name="Weinel C."/>
            <person name="Paulsen I.T."/>
            <person name="Dodson R.J."/>
            <person name="Hilbert H."/>
            <person name="Martins dos Santos V.A.P."/>
            <person name="Fouts D.E."/>
            <person name="Gill S.R."/>
            <person name="Pop M."/>
            <person name="Holmes M."/>
            <person name="Brinkac L.M."/>
            <person name="Beanan M.J."/>
            <person name="DeBoy R.T."/>
            <person name="Daugherty S.C."/>
            <person name="Kolonay J.F."/>
            <person name="Madupu R."/>
            <person name="Nelson W.C."/>
            <person name="White O."/>
            <person name="Peterson J.D."/>
            <person name="Khouri H.M."/>
            <person name="Hance I."/>
            <person name="Chris Lee P."/>
            <person name="Holtzapple E.K."/>
            <person name="Scanlan D."/>
            <person name="Tran K."/>
            <person name="Moazzez A."/>
            <person name="Utterback T.R."/>
            <person name="Rizzo M."/>
            <person name="Lee K."/>
            <person name="Kosack D."/>
            <person name="Moestl D."/>
            <person name="Wedler H."/>
            <person name="Lauber J."/>
            <person name="Stjepandic D."/>
            <person name="Hoheisel J."/>
            <person name="Straetz M."/>
            <person name="Heim S."/>
            <person name="Kiewitz C."/>
            <person name="Eisen J.A."/>
            <person name="Timmis K.N."/>
            <person name="Duesterhoeft A."/>
            <person name="Tuemmler B."/>
            <person name="Fraser C.M."/>
        </authorList>
    </citation>
    <scope>NUCLEOTIDE SEQUENCE [LARGE SCALE GENOMIC DNA]</scope>
    <source>
        <strain>ATCC 47054 / DSM 6125 / CFBP 8728 / NCIMB 11950 / KT2440</strain>
    </source>
</reference>
<reference key="2">
    <citation type="journal article" date="2021" name="FEBS Lett.">
        <title>HutT functions as the major L-histidine transporter in Pseudomonas putida KT2440.</title>
        <authorList>
            <person name="Wirtz L."/>
            <person name="Eder M."/>
            <person name="Brand A.K."/>
            <person name="Jung H."/>
        </authorList>
    </citation>
    <scope>FUNCTION</scope>
    <scope>TRANSPORTER ACTIVITY</scope>
    <scope>ACTIVITY REGULATION</scope>
    <scope>BIOPHYSICOCHEMICAL PROPERTIES</scope>
    <scope>DISRUPTION PHENOTYPE</scope>
    <scope>MUTAGENESIS OF THR-27; GLU-98; LYS-156; PHE-212 AND GLU-218</scope>
    <source>
        <strain>ATCC 47054 / DSM 6125 / CFBP 8728 / NCIMB 11950 / KT2440</strain>
    </source>
</reference>
<feature type="chain" id="PRO_0000461313" description="L-histidine transporter HutT">
    <location>
        <begin position="1"/>
        <end position="467"/>
    </location>
</feature>
<feature type="transmembrane region" description="Helical" evidence="1">
    <location>
        <begin position="18"/>
        <end position="38"/>
    </location>
</feature>
<feature type="transmembrane region" description="Helical" evidence="1">
    <location>
        <begin position="39"/>
        <end position="59"/>
    </location>
</feature>
<feature type="transmembrane region" description="Helical" evidence="1">
    <location>
        <begin position="71"/>
        <end position="91"/>
    </location>
</feature>
<feature type="transmembrane region" description="Helical" evidence="1">
    <location>
        <begin position="99"/>
        <end position="119"/>
    </location>
</feature>
<feature type="transmembrane region" description="Helical" evidence="1">
    <location>
        <begin position="125"/>
        <end position="145"/>
    </location>
</feature>
<feature type="transmembrane region" description="Helical" evidence="1">
    <location>
        <begin position="155"/>
        <end position="175"/>
    </location>
</feature>
<feature type="transmembrane region" description="Helical" evidence="1">
    <location>
        <begin position="200"/>
        <end position="220"/>
    </location>
</feature>
<feature type="transmembrane region" description="Helical" evidence="1">
    <location>
        <begin position="245"/>
        <end position="265"/>
    </location>
</feature>
<feature type="transmembrane region" description="Helical" evidence="1">
    <location>
        <begin position="280"/>
        <end position="300"/>
    </location>
</feature>
<feature type="transmembrane region" description="Helical" evidence="1">
    <location>
        <begin position="334"/>
        <end position="354"/>
    </location>
</feature>
<feature type="transmembrane region" description="Helical" evidence="1">
    <location>
        <begin position="358"/>
        <end position="378"/>
    </location>
</feature>
<feature type="transmembrane region" description="Helical" evidence="1">
    <location>
        <begin position="402"/>
        <end position="422"/>
    </location>
</feature>
<feature type="transmembrane region" description="Helical" evidence="1">
    <location>
        <begin position="429"/>
        <end position="449"/>
    </location>
</feature>
<feature type="mutagenesis site" description="Retains 60% of wild-type activity." evidence="2">
    <original>T</original>
    <variation>A</variation>
    <variation>S</variation>
    <location>
        <position position="27"/>
    </location>
</feature>
<feature type="mutagenesis site" description="Retains 20% of wild-type activity." evidence="2">
    <original>T</original>
    <variation>N</variation>
    <location>
        <position position="27"/>
    </location>
</feature>
<feature type="mutagenesis site" description="Retains 80% of wild-type activity." evidence="2">
    <original>E</original>
    <variation>A</variation>
    <location>
        <position position="98"/>
    </location>
</feature>
<feature type="mutagenesis site" description="Retains less than 10% of wild-type activity." evidence="2">
    <original>K</original>
    <variation>A</variation>
    <variation>Q</variation>
    <location>
        <position position="156"/>
    </location>
</feature>
<feature type="mutagenesis site" description="Retains 40% of wild-type activity." evidence="2">
    <original>K</original>
    <variation>R</variation>
    <location>
        <position position="156"/>
    </location>
</feature>
<feature type="mutagenesis site" description="Loss of activity." evidence="2">
    <original>F</original>
    <variation>A</variation>
    <variation>Q</variation>
    <location>
        <position position="212"/>
    </location>
</feature>
<feature type="mutagenesis site" description="No change in activity." evidence="2">
    <original>F</original>
    <variation>Y</variation>
    <location>
        <position position="212"/>
    </location>
</feature>
<feature type="mutagenesis site" description="Loss of activity." evidence="2">
    <original>E</original>
    <variation>A</variation>
    <variation>Q</variation>
    <location>
        <position position="218"/>
    </location>
</feature>
<feature type="mutagenesis site" description="Retains 70% of wild-type activity." evidence="2">
    <original>E</original>
    <variation>D</variation>
    <location>
        <position position="218"/>
    </location>
</feature>
<proteinExistence type="evidence at protein level"/>
<name>HUTT_PSEPK</name>
<sequence length="467" mass="50050">MQQAQGLKRGLSARHIRFMALGSAIGTGLFYGSASAIQMAGPAVLLAYLIGGAAVFMVMRALGEMAVHNPVAGSFGHYATTYLGPMAGFILGWTYAFEMVIVAIADVTAFGIYMGFWFPEVARWIWVLGIVFLIGGLNLCNVKVFGEMEFWLSLLKVGAIVAMILAGLGIMAFGFSQVGTGHAVGMSNLFDHGGFMPNGVGGLIASFAVVMFAFGGIEIIGVTAGEAKDPQRVIPKAINAVPLRILLFYVLTLFVLMCLYPWPQIGSQGSPFVQIFSNLGIGSAAAVLNVVVISAAISAINSDIFGAGRMMYGLAQQGHAPRGFSKLSKHGVPWMTVVVMGAALLIGVLLNYLIPENVFLLIASIATFATVWVWLMILLTQVAMRRSMSREQVAQLKFPVPFWPYGPAMAIAFMVFIFGVLGYFPDTQAALIVGVIWVVFLVASYLLWCKPRAGQGQPVAEPAELHR</sequence>